<name>CCPB_BACSU</name>
<evidence type="ECO:0000255" key="1">
    <source>
        <dbReference type="PROSITE-ProRule" id="PRU00111"/>
    </source>
</evidence>
<sequence length="311" mass="34847">MANIKEIARLANVSVSTVSRVLNHHPYVSEEKRKLVHQVMKELDYTPNRTAIDLIRGKTHTVGVILPYSDHPCFDKIVNGITKAAFQHEYATTLLPTNYNPDIEIKYLELLRTKKIDGLIITSRANHWDSILAYQEYGPVIACEDTGDIDVPCAFNDRKTAYAESFRYLKSRGHENIAFTCVREADRSPSTADKAAAYKAVCGRLEDRHMLSGCNDMNDGELAAEHFYMSGRVPTAIYANSDEVAAGIHLFAKKNNWDVEIIGEGNTSISRVLGFPSLDLNLEQLGIAAFSLFLQDEPADIKIQHKFKKKA</sequence>
<accession>P37517</accession>
<reference key="1">
    <citation type="journal article" date="1994" name="DNA Res.">
        <title>Systematic sequencing of the 180 kilobase region of the Bacillus subtilis chromosome containing the replication origin.</title>
        <authorList>
            <person name="Ogasawara N."/>
            <person name="Nakai S."/>
            <person name="Yoshikawa H."/>
        </authorList>
    </citation>
    <scope>NUCLEOTIDE SEQUENCE [GENOMIC DNA]</scope>
    <source>
        <strain>168</strain>
    </source>
</reference>
<reference key="2">
    <citation type="journal article" date="1997" name="Nature">
        <title>The complete genome sequence of the Gram-positive bacterium Bacillus subtilis.</title>
        <authorList>
            <person name="Kunst F."/>
            <person name="Ogasawara N."/>
            <person name="Moszer I."/>
            <person name="Albertini A.M."/>
            <person name="Alloni G."/>
            <person name="Azevedo V."/>
            <person name="Bertero M.G."/>
            <person name="Bessieres P."/>
            <person name="Bolotin A."/>
            <person name="Borchert S."/>
            <person name="Borriss R."/>
            <person name="Boursier L."/>
            <person name="Brans A."/>
            <person name="Braun M."/>
            <person name="Brignell S.C."/>
            <person name="Bron S."/>
            <person name="Brouillet S."/>
            <person name="Bruschi C.V."/>
            <person name="Caldwell B."/>
            <person name="Capuano V."/>
            <person name="Carter N.M."/>
            <person name="Choi S.-K."/>
            <person name="Codani J.-J."/>
            <person name="Connerton I.F."/>
            <person name="Cummings N.J."/>
            <person name="Daniel R.A."/>
            <person name="Denizot F."/>
            <person name="Devine K.M."/>
            <person name="Duesterhoeft A."/>
            <person name="Ehrlich S.D."/>
            <person name="Emmerson P.T."/>
            <person name="Entian K.-D."/>
            <person name="Errington J."/>
            <person name="Fabret C."/>
            <person name="Ferrari E."/>
            <person name="Foulger D."/>
            <person name="Fritz C."/>
            <person name="Fujita M."/>
            <person name="Fujita Y."/>
            <person name="Fuma S."/>
            <person name="Galizzi A."/>
            <person name="Galleron N."/>
            <person name="Ghim S.-Y."/>
            <person name="Glaser P."/>
            <person name="Goffeau A."/>
            <person name="Golightly E.J."/>
            <person name="Grandi G."/>
            <person name="Guiseppi G."/>
            <person name="Guy B.J."/>
            <person name="Haga K."/>
            <person name="Haiech J."/>
            <person name="Harwood C.R."/>
            <person name="Henaut A."/>
            <person name="Hilbert H."/>
            <person name="Holsappel S."/>
            <person name="Hosono S."/>
            <person name="Hullo M.-F."/>
            <person name="Itaya M."/>
            <person name="Jones L.-M."/>
            <person name="Joris B."/>
            <person name="Karamata D."/>
            <person name="Kasahara Y."/>
            <person name="Klaerr-Blanchard M."/>
            <person name="Klein C."/>
            <person name="Kobayashi Y."/>
            <person name="Koetter P."/>
            <person name="Koningstein G."/>
            <person name="Krogh S."/>
            <person name="Kumano M."/>
            <person name="Kurita K."/>
            <person name="Lapidus A."/>
            <person name="Lardinois S."/>
            <person name="Lauber J."/>
            <person name="Lazarevic V."/>
            <person name="Lee S.-M."/>
            <person name="Levine A."/>
            <person name="Liu H."/>
            <person name="Masuda S."/>
            <person name="Mauel C."/>
            <person name="Medigue C."/>
            <person name="Medina N."/>
            <person name="Mellado R.P."/>
            <person name="Mizuno M."/>
            <person name="Moestl D."/>
            <person name="Nakai S."/>
            <person name="Noback M."/>
            <person name="Noone D."/>
            <person name="O'Reilly M."/>
            <person name="Ogawa K."/>
            <person name="Ogiwara A."/>
            <person name="Oudega B."/>
            <person name="Park S.-H."/>
            <person name="Parro V."/>
            <person name="Pohl T.M."/>
            <person name="Portetelle D."/>
            <person name="Porwollik S."/>
            <person name="Prescott A.M."/>
            <person name="Presecan E."/>
            <person name="Pujic P."/>
            <person name="Purnelle B."/>
            <person name="Rapoport G."/>
            <person name="Rey M."/>
            <person name="Reynolds S."/>
            <person name="Rieger M."/>
            <person name="Rivolta C."/>
            <person name="Rocha E."/>
            <person name="Roche B."/>
            <person name="Rose M."/>
            <person name="Sadaie Y."/>
            <person name="Sato T."/>
            <person name="Scanlan E."/>
            <person name="Schleich S."/>
            <person name="Schroeter R."/>
            <person name="Scoffone F."/>
            <person name="Sekiguchi J."/>
            <person name="Sekowska A."/>
            <person name="Seror S.J."/>
            <person name="Serror P."/>
            <person name="Shin B.-S."/>
            <person name="Soldo B."/>
            <person name="Sorokin A."/>
            <person name="Tacconi E."/>
            <person name="Takagi T."/>
            <person name="Takahashi H."/>
            <person name="Takemaru K."/>
            <person name="Takeuchi M."/>
            <person name="Tamakoshi A."/>
            <person name="Tanaka T."/>
            <person name="Terpstra P."/>
            <person name="Tognoni A."/>
            <person name="Tosato V."/>
            <person name="Uchiyama S."/>
            <person name="Vandenbol M."/>
            <person name="Vannier F."/>
            <person name="Vassarotti A."/>
            <person name="Viari A."/>
            <person name="Wambutt R."/>
            <person name="Wedler E."/>
            <person name="Wedler H."/>
            <person name="Weitzenegger T."/>
            <person name="Winters P."/>
            <person name="Wipat A."/>
            <person name="Yamamoto H."/>
            <person name="Yamane K."/>
            <person name="Yasumoto K."/>
            <person name="Yata K."/>
            <person name="Yoshida K."/>
            <person name="Yoshikawa H.-F."/>
            <person name="Zumstein E."/>
            <person name="Yoshikawa H."/>
            <person name="Danchin A."/>
        </authorList>
    </citation>
    <scope>NUCLEOTIDE SEQUENCE [LARGE SCALE GENOMIC DNA]</scope>
    <source>
        <strain>168</strain>
    </source>
</reference>
<reference key="3">
    <citation type="journal article" date="1994" name="Biochim. Biophys. Acta">
        <title>Isolation of Tn917 insertional mutants of Bacillus subtilis that are resistant to the protonophore carbonyl cyanide m-chlorophenylhydrazone.</title>
        <authorList>
            <person name="Quirk P.G."/>
            <person name="Guffanti A.A."/>
            <person name="Clejan S."/>
            <person name="Cheng J."/>
            <person name="Krulwich T.A."/>
        </authorList>
    </citation>
    <scope>NUCLEOTIDE SEQUENCE [GENOMIC DNA] OF 78-311</scope>
    <source>
        <strain>BD99</strain>
    </source>
</reference>
<reference key="4">
    <citation type="journal article" date="1998" name="J. Bacteriol.">
        <title>CcpB, a novel transcription factor implicated in catabolite repression in Bacillus subtilis.</title>
        <authorList>
            <person name="Chauvaux S."/>
            <person name="Paulsen I.T."/>
            <person name="Saier M.H. Jr."/>
        </authorList>
    </citation>
    <scope>CHARACTERIZATION</scope>
</reference>
<gene>
    <name type="primary">ccpB</name>
    <name type="synonym">yyaG</name>
    <name type="ordered locus">BSU40870</name>
</gene>
<dbReference type="EMBL" id="D26185">
    <property type="protein sequence ID" value="BAA05217.1"/>
    <property type="molecule type" value="Genomic_DNA"/>
</dbReference>
<dbReference type="EMBL" id="AL009126">
    <property type="protein sequence ID" value="CAB16124.1"/>
    <property type="molecule type" value="Genomic_DNA"/>
</dbReference>
<dbReference type="EMBL" id="L16865">
    <property type="protein sequence ID" value="AAA64345.1"/>
    <property type="molecule type" value="Genomic_DNA"/>
</dbReference>
<dbReference type="PIR" id="S66011">
    <property type="entry name" value="S66011"/>
</dbReference>
<dbReference type="RefSeq" id="NP_391967.1">
    <property type="nucleotide sequence ID" value="NC_000964.3"/>
</dbReference>
<dbReference type="RefSeq" id="WP_003243573.1">
    <property type="nucleotide sequence ID" value="NZ_OZ025638.1"/>
</dbReference>
<dbReference type="SMR" id="P37517"/>
<dbReference type="FunCoup" id="P37517">
    <property type="interactions" value="24"/>
</dbReference>
<dbReference type="STRING" id="224308.BSU40870"/>
<dbReference type="PaxDb" id="224308-BSU40870"/>
<dbReference type="DNASU" id="937876"/>
<dbReference type="EnsemblBacteria" id="CAB16124">
    <property type="protein sequence ID" value="CAB16124"/>
    <property type="gene ID" value="BSU_40870"/>
</dbReference>
<dbReference type="GeneID" id="937876"/>
<dbReference type="KEGG" id="bsu:BSU40870"/>
<dbReference type="PATRIC" id="fig|224308.179.peg.4428"/>
<dbReference type="eggNOG" id="COG1609">
    <property type="taxonomic scope" value="Bacteria"/>
</dbReference>
<dbReference type="InParanoid" id="P37517"/>
<dbReference type="OrthoDB" id="9798934at2"/>
<dbReference type="PhylomeDB" id="P37517"/>
<dbReference type="BioCyc" id="BSUB:BSU40870-MONOMER"/>
<dbReference type="Proteomes" id="UP000001570">
    <property type="component" value="Chromosome"/>
</dbReference>
<dbReference type="GO" id="GO:0003700">
    <property type="term" value="F:DNA-binding transcription factor activity"/>
    <property type="evidence" value="ECO:0000318"/>
    <property type="project" value="GO_Central"/>
</dbReference>
<dbReference type="GO" id="GO:0000976">
    <property type="term" value="F:transcription cis-regulatory region binding"/>
    <property type="evidence" value="ECO:0000318"/>
    <property type="project" value="GO_Central"/>
</dbReference>
<dbReference type="GO" id="GO:0006355">
    <property type="term" value="P:regulation of DNA-templated transcription"/>
    <property type="evidence" value="ECO:0000318"/>
    <property type="project" value="GO_Central"/>
</dbReference>
<dbReference type="CDD" id="cd01392">
    <property type="entry name" value="HTH_LacI"/>
    <property type="match status" value="1"/>
</dbReference>
<dbReference type="CDD" id="cd06286">
    <property type="entry name" value="PBP1_CcpB-like"/>
    <property type="match status" value="1"/>
</dbReference>
<dbReference type="Gene3D" id="3.40.50.2300">
    <property type="match status" value="2"/>
</dbReference>
<dbReference type="Gene3D" id="1.10.260.40">
    <property type="entry name" value="lambda repressor-like DNA-binding domains"/>
    <property type="match status" value="1"/>
</dbReference>
<dbReference type="InterPro" id="IPR000843">
    <property type="entry name" value="HTH_LacI"/>
</dbReference>
<dbReference type="InterPro" id="IPR010982">
    <property type="entry name" value="Lambda_DNA-bd_dom_sf"/>
</dbReference>
<dbReference type="InterPro" id="IPR001761">
    <property type="entry name" value="Peripla_BP/Lac1_sug-bd_dom"/>
</dbReference>
<dbReference type="InterPro" id="IPR028082">
    <property type="entry name" value="Peripla_BP_I"/>
</dbReference>
<dbReference type="PANTHER" id="PTHR30146:SF105">
    <property type="entry name" value="CATABOLITE CONTROL PROTEIN B"/>
    <property type="match status" value="1"/>
</dbReference>
<dbReference type="PANTHER" id="PTHR30146">
    <property type="entry name" value="LACI-RELATED TRANSCRIPTIONAL REPRESSOR"/>
    <property type="match status" value="1"/>
</dbReference>
<dbReference type="Pfam" id="PF00356">
    <property type="entry name" value="LacI"/>
    <property type="match status" value="1"/>
</dbReference>
<dbReference type="Pfam" id="PF00532">
    <property type="entry name" value="Peripla_BP_1"/>
    <property type="match status" value="1"/>
</dbReference>
<dbReference type="PRINTS" id="PR00036">
    <property type="entry name" value="HTHLACI"/>
</dbReference>
<dbReference type="SMART" id="SM00354">
    <property type="entry name" value="HTH_LACI"/>
    <property type="match status" value="1"/>
</dbReference>
<dbReference type="SUPFAM" id="SSF47413">
    <property type="entry name" value="lambda repressor-like DNA-binding domains"/>
    <property type="match status" value="1"/>
</dbReference>
<dbReference type="SUPFAM" id="SSF53822">
    <property type="entry name" value="Periplasmic binding protein-like I"/>
    <property type="match status" value="1"/>
</dbReference>
<dbReference type="PROSITE" id="PS00356">
    <property type="entry name" value="HTH_LACI_1"/>
    <property type="match status" value="1"/>
</dbReference>
<dbReference type="PROSITE" id="PS50932">
    <property type="entry name" value="HTH_LACI_2"/>
    <property type="match status" value="1"/>
</dbReference>
<feature type="chain" id="PRO_0000107936" description="Catabolite control protein B">
    <location>
        <begin position="1"/>
        <end position="311"/>
    </location>
</feature>
<feature type="domain" description="HTH lacI-type" evidence="1">
    <location>
        <begin position="1"/>
        <end position="56"/>
    </location>
</feature>
<feature type="DNA-binding region" description="H-T-H motif" evidence="1">
    <location>
        <begin position="4"/>
        <end position="23"/>
    </location>
</feature>
<protein>
    <recommendedName>
        <fullName>Catabolite control protein B</fullName>
    </recommendedName>
</protein>
<proteinExistence type="evidence at protein level"/>
<organism>
    <name type="scientific">Bacillus subtilis (strain 168)</name>
    <dbReference type="NCBI Taxonomy" id="224308"/>
    <lineage>
        <taxon>Bacteria</taxon>
        <taxon>Bacillati</taxon>
        <taxon>Bacillota</taxon>
        <taxon>Bacilli</taxon>
        <taxon>Bacillales</taxon>
        <taxon>Bacillaceae</taxon>
        <taxon>Bacillus</taxon>
    </lineage>
</organism>
<comment type="function">
    <text>Transcriptional regulator involved in catabolite repression of several operons.</text>
</comment>
<comment type="subunit">
    <text>Seems to be complexed to phosphorylated HPr.</text>
</comment>
<keyword id="KW-0238">DNA-binding</keyword>
<keyword id="KW-1185">Reference proteome</keyword>
<keyword id="KW-0678">Repressor</keyword>
<keyword id="KW-0804">Transcription</keyword>
<keyword id="KW-0805">Transcription regulation</keyword>